<sequence length="147" mass="16247">MCGCVHSTQDQALRLEGEPNPPAAPTSTLAPKNMPKSISISKQLASIKALRKGSDLEKAIATAALVFRNSSDPDGKLRKATAKNLLQTQFKNFAEGQETKARYKDLLSELDEHTENKLDFEDFMVLLLSVTIMSDLLQNIWSVKITQ</sequence>
<keyword id="KW-0966">Cell projection</keyword>
<keyword id="KW-0969">Cilium</keyword>
<keyword id="KW-1185">Reference proteome</keyword>
<protein>
    <recommendedName>
        <fullName>Sentan</fullName>
    </recommendedName>
    <alternativeName>
        <fullName>Protein S100-A1-like</fullName>
    </alternativeName>
    <alternativeName>
        <fullName>S100 calcium-binding protein A1-like</fullName>
    </alternativeName>
</protein>
<reference key="1">
    <citation type="submission" date="2006-08" db="EMBL/GenBank/DDBJ databases">
        <authorList>
            <consortium name="NIH - Mammalian Gene Collection (MGC) project"/>
        </authorList>
    </citation>
    <scope>NUCLEOTIDE SEQUENCE [LARGE SCALE MRNA]</scope>
    <source>
        <strain>Crossbred X Angus</strain>
        <tissue>Liver</tissue>
    </source>
</reference>
<reference key="2">
    <citation type="journal article" date="2008" name="Mol. Biol. Cell">
        <title>Sentan: a novel specific component of the apical structure of vertebrate motile cilia.</title>
        <authorList>
            <person name="Kubo A."/>
            <person name="Yuba-Kubo A."/>
            <person name="Tsukita S."/>
            <person name="Tsukita S."/>
            <person name="Amagai M."/>
        </authorList>
    </citation>
    <scope>IDENTIFICATION</scope>
</reference>
<accession>Q0P561</accession>
<accession>B7FF68</accession>
<dbReference type="EMBL" id="BC120476">
    <property type="protein sequence ID" value="AAI20477.1"/>
    <property type="molecule type" value="mRNA"/>
</dbReference>
<dbReference type="EMBL" id="BR000726">
    <property type="protein sequence ID" value="FAA00432.1"/>
    <property type="molecule type" value="mRNA"/>
</dbReference>
<dbReference type="RefSeq" id="NP_001071606.1">
    <property type="nucleotide sequence ID" value="NM_001078138.2"/>
</dbReference>
<dbReference type="SMR" id="Q0P561"/>
<dbReference type="FunCoup" id="Q0P561">
    <property type="interactions" value="1"/>
</dbReference>
<dbReference type="STRING" id="9913.ENSBTAP00000017319"/>
<dbReference type="PaxDb" id="9913-ENSBTAP00000017319"/>
<dbReference type="GeneID" id="768326"/>
<dbReference type="KEGG" id="bta:768326"/>
<dbReference type="CTD" id="132203"/>
<dbReference type="VEuPathDB" id="HostDB:ENSBTAG00000013026"/>
<dbReference type="eggNOG" id="ENOG502S6AH">
    <property type="taxonomic scope" value="Eukaryota"/>
</dbReference>
<dbReference type="InParanoid" id="Q0P561"/>
<dbReference type="OMA" id="MCGCRAS"/>
<dbReference type="OrthoDB" id="9362863at2759"/>
<dbReference type="Proteomes" id="UP000009136">
    <property type="component" value="Chromosome 22"/>
</dbReference>
<dbReference type="Bgee" id="ENSBTAG00000013026">
    <property type="expression patterns" value="Expressed in olfactory segment of nasal mucosa and 52 other cell types or tissues"/>
</dbReference>
<dbReference type="GO" id="GO:0005929">
    <property type="term" value="C:cilium"/>
    <property type="evidence" value="ECO:0007669"/>
    <property type="project" value="UniProtKB-SubCell"/>
</dbReference>
<dbReference type="GO" id="GO:0005509">
    <property type="term" value="F:calcium ion binding"/>
    <property type="evidence" value="ECO:0000318"/>
    <property type="project" value="GO_Central"/>
</dbReference>
<dbReference type="GO" id="GO:0048306">
    <property type="term" value="F:calcium-dependent protein binding"/>
    <property type="evidence" value="ECO:0000318"/>
    <property type="project" value="GO_Central"/>
</dbReference>
<dbReference type="GO" id="GO:0046914">
    <property type="term" value="F:transition metal ion binding"/>
    <property type="evidence" value="ECO:0007669"/>
    <property type="project" value="InterPro"/>
</dbReference>
<dbReference type="CDD" id="cd00213">
    <property type="entry name" value="S-100"/>
    <property type="match status" value="1"/>
</dbReference>
<dbReference type="Gene3D" id="1.10.238.10">
    <property type="entry name" value="EF-hand"/>
    <property type="match status" value="1"/>
</dbReference>
<dbReference type="InterPro" id="IPR011992">
    <property type="entry name" value="EF-hand-dom_pair"/>
</dbReference>
<dbReference type="InterPro" id="IPR000261">
    <property type="entry name" value="EH_dom"/>
</dbReference>
<dbReference type="InterPro" id="IPR034325">
    <property type="entry name" value="S-100_dom"/>
</dbReference>
<dbReference type="InterPro" id="IPR013787">
    <property type="entry name" value="S100_Ca-bd_sub"/>
</dbReference>
<dbReference type="PANTHER" id="PTHR11639:SF134">
    <property type="entry name" value="PROTEIN S100-A1-RELATED"/>
    <property type="match status" value="1"/>
</dbReference>
<dbReference type="PANTHER" id="PTHR11639">
    <property type="entry name" value="S100 CALCIUM-BINDING PROTEIN"/>
    <property type="match status" value="1"/>
</dbReference>
<dbReference type="SMART" id="SM01394">
    <property type="entry name" value="S_100"/>
    <property type="match status" value="1"/>
</dbReference>
<dbReference type="SUPFAM" id="SSF47473">
    <property type="entry name" value="EF-hand"/>
    <property type="match status" value="1"/>
</dbReference>
<organism>
    <name type="scientific">Bos taurus</name>
    <name type="common">Bovine</name>
    <dbReference type="NCBI Taxonomy" id="9913"/>
    <lineage>
        <taxon>Eukaryota</taxon>
        <taxon>Metazoa</taxon>
        <taxon>Chordata</taxon>
        <taxon>Craniata</taxon>
        <taxon>Vertebrata</taxon>
        <taxon>Euteleostomi</taxon>
        <taxon>Mammalia</taxon>
        <taxon>Eutheria</taxon>
        <taxon>Laurasiatheria</taxon>
        <taxon>Artiodactyla</taxon>
        <taxon>Ruminantia</taxon>
        <taxon>Pecora</taxon>
        <taxon>Bovidae</taxon>
        <taxon>Bovinae</taxon>
        <taxon>Bos</taxon>
    </lineage>
</organism>
<name>SNTAN_BOVIN</name>
<comment type="function">
    <text evidence="1">May be a component of the linker structure that bridges the ciliary membrane and peripheral singlet microtubules.</text>
</comment>
<comment type="subcellular location">
    <subcellularLocation>
        <location evidence="1">Cell projection</location>
        <location evidence="1">Cilium</location>
    </subcellularLocation>
    <text evidence="1">Expressed exclusively at the cilium tip where it localizes between the cell membrane and peripheral A-subfibers.</text>
</comment>
<comment type="miscellaneous">
    <text>'Sentan' means 'tip' in Japanese.</text>
</comment>
<comment type="similarity">
    <text evidence="3">Belongs to the S-100 family.</text>
</comment>
<gene>
    <name type="primary">SNTN</name>
    <name type="synonym">S100A1L</name>
</gene>
<evidence type="ECO:0000250" key="1"/>
<evidence type="ECO:0000256" key="2">
    <source>
        <dbReference type="SAM" id="MobiDB-lite"/>
    </source>
</evidence>
<evidence type="ECO:0000305" key="3"/>
<feature type="chain" id="PRO_0000342515" description="Sentan">
    <location>
        <begin position="1"/>
        <end position="147"/>
    </location>
</feature>
<feature type="region of interest" description="Disordered" evidence="2">
    <location>
        <begin position="14"/>
        <end position="34"/>
    </location>
</feature>
<feature type="compositionally biased region" description="Polar residues" evidence="2">
    <location>
        <begin position="25"/>
        <end position="34"/>
    </location>
</feature>
<proteinExistence type="evidence at transcript level"/>